<name>CHZ1_SCLS1</name>
<accession>A7ER98</accession>
<dbReference type="EMBL" id="CH476630">
    <property type="protein sequence ID" value="EDN91990.1"/>
    <property type="molecule type" value="Genomic_DNA"/>
</dbReference>
<dbReference type="RefSeq" id="XP_001591226.1">
    <property type="nucleotide sequence ID" value="XM_001591176.1"/>
</dbReference>
<dbReference type="SMR" id="A7ER98"/>
<dbReference type="STRING" id="665079.A7ER98"/>
<dbReference type="GeneID" id="5487620"/>
<dbReference type="KEGG" id="ssl:SS1G_07852"/>
<dbReference type="InParanoid" id="A7ER98"/>
<dbReference type="OMA" id="NDADDLM"/>
<dbReference type="Proteomes" id="UP000001312">
    <property type="component" value="Unassembled WGS sequence"/>
</dbReference>
<dbReference type="GO" id="GO:0005634">
    <property type="term" value="C:nucleus"/>
    <property type="evidence" value="ECO:0007669"/>
    <property type="project" value="UniProtKB-SubCell"/>
</dbReference>
<dbReference type="InterPro" id="IPR019098">
    <property type="entry name" value="Histone_chaperone_domain_CHZ"/>
</dbReference>
<dbReference type="Pfam" id="PF09649">
    <property type="entry name" value="CHZ"/>
    <property type="match status" value="1"/>
</dbReference>
<dbReference type="SMART" id="SM01082">
    <property type="entry name" value="CHZ"/>
    <property type="match status" value="1"/>
</dbReference>
<sequence length="121" mass="13081">MSAQTGSTNVSADKGKGKSVAEPQDVTMGEGEDSSSEDDVRSQGLKTAAREHYLTTYIAEEVEEEASDNEIDKSNIIQGRRTRGKKIDFAAAAKDLPAEDDEDEDDDFQSEGEDDDEMGGN</sequence>
<reference key="1">
    <citation type="journal article" date="2011" name="PLoS Genet.">
        <title>Genomic analysis of the necrotrophic fungal pathogens Sclerotinia sclerotiorum and Botrytis cinerea.</title>
        <authorList>
            <person name="Amselem J."/>
            <person name="Cuomo C.A."/>
            <person name="van Kan J.A.L."/>
            <person name="Viaud M."/>
            <person name="Benito E.P."/>
            <person name="Couloux A."/>
            <person name="Coutinho P.M."/>
            <person name="de Vries R.P."/>
            <person name="Dyer P.S."/>
            <person name="Fillinger S."/>
            <person name="Fournier E."/>
            <person name="Gout L."/>
            <person name="Hahn M."/>
            <person name="Kohn L."/>
            <person name="Lapalu N."/>
            <person name="Plummer K.M."/>
            <person name="Pradier J.-M."/>
            <person name="Quevillon E."/>
            <person name="Sharon A."/>
            <person name="Simon A."/>
            <person name="ten Have A."/>
            <person name="Tudzynski B."/>
            <person name="Tudzynski P."/>
            <person name="Wincker P."/>
            <person name="Andrew M."/>
            <person name="Anthouard V."/>
            <person name="Beever R.E."/>
            <person name="Beffa R."/>
            <person name="Benoit I."/>
            <person name="Bouzid O."/>
            <person name="Brault B."/>
            <person name="Chen Z."/>
            <person name="Choquer M."/>
            <person name="Collemare J."/>
            <person name="Cotton P."/>
            <person name="Danchin E.G."/>
            <person name="Da Silva C."/>
            <person name="Gautier A."/>
            <person name="Giraud C."/>
            <person name="Giraud T."/>
            <person name="Gonzalez C."/>
            <person name="Grossetete S."/>
            <person name="Gueldener U."/>
            <person name="Henrissat B."/>
            <person name="Howlett B.J."/>
            <person name="Kodira C."/>
            <person name="Kretschmer M."/>
            <person name="Lappartient A."/>
            <person name="Leroch M."/>
            <person name="Levis C."/>
            <person name="Mauceli E."/>
            <person name="Neuveglise C."/>
            <person name="Oeser B."/>
            <person name="Pearson M."/>
            <person name="Poulain J."/>
            <person name="Poussereau N."/>
            <person name="Quesneville H."/>
            <person name="Rascle C."/>
            <person name="Schumacher J."/>
            <person name="Segurens B."/>
            <person name="Sexton A."/>
            <person name="Silva E."/>
            <person name="Sirven C."/>
            <person name="Soanes D.M."/>
            <person name="Talbot N.J."/>
            <person name="Templeton M."/>
            <person name="Yandava C."/>
            <person name="Yarden O."/>
            <person name="Zeng Q."/>
            <person name="Rollins J.A."/>
            <person name="Lebrun M.-H."/>
            <person name="Dickman M."/>
        </authorList>
    </citation>
    <scope>NUCLEOTIDE SEQUENCE [LARGE SCALE GENOMIC DNA]</scope>
    <source>
        <strain>ATCC 18683 / 1980 / Ss-1</strain>
    </source>
</reference>
<keyword id="KW-0143">Chaperone</keyword>
<keyword id="KW-0539">Nucleus</keyword>
<keyword id="KW-1185">Reference proteome</keyword>
<proteinExistence type="inferred from homology"/>
<comment type="function">
    <text evidence="1">Forms a chaperone-bound H2A.Z-H2B complex that acts as a source for SWR1 complex-dependent H2A to H2A.Z histone replacement in chromatin.</text>
</comment>
<comment type="subunit">
    <text evidence="1">Forms a heterotrimer with H2A.Z-H2B, stabilizing the association of the histone dimer. Also, with a lower affinity, forms a heterotrimer with H2A-H2B (By similarity).</text>
</comment>
<comment type="subcellular location">
    <subcellularLocation>
        <location evidence="1">Nucleus</location>
    </subcellularLocation>
</comment>
<comment type="similarity">
    <text evidence="3">Belongs to the CHZ1 family.</text>
</comment>
<gene>
    <name type="primary">chz1</name>
    <name type="ORF">SS1G_07852</name>
</gene>
<evidence type="ECO:0000250" key="1"/>
<evidence type="ECO:0000256" key="2">
    <source>
        <dbReference type="SAM" id="MobiDB-lite"/>
    </source>
</evidence>
<evidence type="ECO:0000305" key="3"/>
<feature type="chain" id="PRO_0000330220" description="Histone H2A.Z-specific chaperone chz1">
    <location>
        <begin position="1"/>
        <end position="121"/>
    </location>
</feature>
<feature type="region of interest" description="Disordered" evidence="2">
    <location>
        <begin position="1"/>
        <end position="45"/>
    </location>
</feature>
<feature type="region of interest" description="Disordered" evidence="2">
    <location>
        <begin position="62"/>
        <end position="121"/>
    </location>
</feature>
<feature type="compositionally biased region" description="Polar residues" evidence="2">
    <location>
        <begin position="1"/>
        <end position="11"/>
    </location>
</feature>
<feature type="compositionally biased region" description="Acidic residues" evidence="2">
    <location>
        <begin position="98"/>
        <end position="121"/>
    </location>
</feature>
<protein>
    <recommendedName>
        <fullName>Histone H2A.Z-specific chaperone chz1</fullName>
    </recommendedName>
</protein>
<organism>
    <name type="scientific">Sclerotinia sclerotiorum (strain ATCC 18683 / 1980 / Ss-1)</name>
    <name type="common">White mold</name>
    <name type="synonym">Whetzelinia sclerotiorum</name>
    <dbReference type="NCBI Taxonomy" id="665079"/>
    <lineage>
        <taxon>Eukaryota</taxon>
        <taxon>Fungi</taxon>
        <taxon>Dikarya</taxon>
        <taxon>Ascomycota</taxon>
        <taxon>Pezizomycotina</taxon>
        <taxon>Leotiomycetes</taxon>
        <taxon>Helotiales</taxon>
        <taxon>Sclerotiniaceae</taxon>
        <taxon>Sclerotinia</taxon>
    </lineage>
</organism>